<reference key="1">
    <citation type="journal article" date="2014" name="Proc. Natl. Acad. Sci. U.S.A.">
        <title>Trajectory and genomic determinants of fungal-pathogen speciation and host adaptation.</title>
        <authorList>
            <person name="Hu X."/>
            <person name="Xiao G."/>
            <person name="Zheng P."/>
            <person name="Shang Y."/>
            <person name="Su Y."/>
            <person name="Zhang X."/>
            <person name="Liu X."/>
            <person name="Zhan S."/>
            <person name="St Leger R.J."/>
            <person name="Wang C."/>
        </authorList>
    </citation>
    <scope>NUCLEOTIDE SEQUENCE [LARGE SCALE GENOMIC DNA]</scope>
    <source>
        <strain>ARSEF 1941</strain>
    </source>
</reference>
<reference key="2">
    <citation type="journal article" date="2018" name="PLoS Genet.">
        <title>Duplication of a Pks gene cluster and subsequent functional diversification facilitate environmental adaptation in Metarhizium species.</title>
        <authorList>
            <person name="Zeng G."/>
            <person name="Zhang P."/>
            <person name="Zhang Q."/>
            <person name="Zhao H."/>
            <person name="Li Z."/>
            <person name="Zhang X."/>
            <person name="Wang C."/>
            <person name="Yin W.B."/>
            <person name="Fang W."/>
        </authorList>
    </citation>
    <scope>NUCLEOTIDE SEQUENCE [MRNA]</scope>
    <scope>DISRUPTION PHENOTYPE</scope>
    <scope>FUNCTION</scope>
    <scope>CATALYTIC ACTIVITY</scope>
    <scope>INDUCTION</scope>
    <scope>DOMAIN</scope>
    <source>
        <strain>ARSEF 1941</strain>
    </source>
</reference>
<comment type="function">
    <text evidence="1 9">Polyketide synthase; part of the Pks1 gene cluster that mediates the biosynthesis of an anthraquinone derivative pigment that contributes to conidial pigmentation that provides protection from UV radiation, heat and cold stress (PubMed:29958281). The polyketide synthase Pks1 produces 1-acetyl-2,4,6,8-tetrahydroxy-9,10-anthraquinone though condensation of acetyl-CoA with malonyl-CoA (By similarity). The dehydratase EthD and the laccase Mlac1 further convert the anthraquinone derivative into the final conidial pigment (By similarity).</text>
</comment>
<comment type="induction">
    <text evidence="1 9">Highly expressed during conidiation (PubMed:29958281). A conserved conidiation regulatory pathway containing BrlA, AbaA and WetA regulates expression. During conidiation BlrA up-regulates AbaA, which in turn controls WetA. Moreover, the Hog1 MAPK regulates fungal conidiation by controlling the conidiation regulatory pathway, and that all three pigmentation genes Pks1, EthD and Mlac1 exercise feedback regulation of conidiation (By similarity).</text>
</comment>
<comment type="domain">
    <text evidence="12">Multidomain protein; including a starter unit:ACP transacylase (SAT) that selects the starter unit; a ketosynthase (KS) that catalyzes repeated decarboxylative condensation to elongate the polyketide backbone; a malonyl-CoA:ACP transacylase (MAT) that selects and transfers the extender unit malonyl-CoA; a product template (PT) domain that controls the immediate cyclization regioselectivity of the reactive polyketide backbone; and an acyl-carrier protein (ACP) that serves as the tether of the growing and completed polyketide via its phosphopantetheinyl arm.</text>
</comment>
<comment type="domain">
    <text evidence="12">The release of the polyketide chain from the non-reducing polyketide synthase is mediated by the thioesterase (TE) domain localized at the C-ter of the protein.</text>
</comment>
<comment type="disruption phenotype">
    <text evidence="9">Results in red conidia.</text>
</comment>
<comment type="sequence caution" evidence="11">
    <conflict type="erroneous gene model prediction">
        <sequence resource="EMBL-CDS" id="KHN93908"/>
    </conflict>
</comment>
<gene>
    <name evidence="10" type="primary">Pks1</name>
    <name type="ORF">MAM_08215</name>
</gene>
<evidence type="ECO:0000250" key="1">
    <source>
        <dbReference type="UniProtKB" id="E9F646"/>
    </source>
</evidence>
<evidence type="ECO:0000250" key="2">
    <source>
        <dbReference type="UniProtKB" id="Q03149"/>
    </source>
</evidence>
<evidence type="ECO:0000255" key="3"/>
<evidence type="ECO:0000255" key="4">
    <source>
        <dbReference type="PROSITE-ProRule" id="PRU00258"/>
    </source>
</evidence>
<evidence type="ECO:0000255" key="5">
    <source>
        <dbReference type="PROSITE-ProRule" id="PRU01348"/>
    </source>
</evidence>
<evidence type="ECO:0000255" key="6">
    <source>
        <dbReference type="PROSITE-ProRule" id="PRU01363"/>
    </source>
</evidence>
<evidence type="ECO:0000255" key="7">
    <source>
        <dbReference type="PROSITE-ProRule" id="PRU10022"/>
    </source>
</evidence>
<evidence type="ECO:0000256" key="8">
    <source>
        <dbReference type="SAM" id="MobiDB-lite"/>
    </source>
</evidence>
<evidence type="ECO:0000269" key="9">
    <source>
    </source>
</evidence>
<evidence type="ECO:0000303" key="10">
    <source>
    </source>
</evidence>
<evidence type="ECO:0000305" key="11"/>
<evidence type="ECO:0000305" key="12">
    <source>
    </source>
</evidence>
<feature type="chain" id="PRO_0000445742" description="Polyketide synthase 1">
    <location>
        <begin position="1"/>
        <end position="2162"/>
    </location>
</feature>
<feature type="domain" description="Ketosynthase family 3 (KS3)" evidence="5 12">
    <location>
        <begin position="397"/>
        <end position="841"/>
    </location>
</feature>
<feature type="domain" description="PKS/mFAS DH" evidence="6">
    <location>
        <begin position="1326"/>
        <end position="1631"/>
    </location>
</feature>
<feature type="domain" description="Carrier 1" evidence="4 12">
    <location>
        <begin position="1692"/>
        <end position="1766"/>
    </location>
</feature>
<feature type="domain" description="Carrier 2" evidence="4 12">
    <location>
        <begin position="1807"/>
        <end position="1884"/>
    </location>
</feature>
<feature type="region of interest" description="N-terminal acylcarrier protein transacylase domain (SAT)" evidence="3 12">
    <location>
        <begin position="19"/>
        <end position="264"/>
    </location>
</feature>
<feature type="region of interest" description="Malonyl-CoA:ACP transacylase (MAT) domain" evidence="3 12">
    <location>
        <begin position="941"/>
        <end position="1245"/>
    </location>
</feature>
<feature type="region of interest" description="Product template (PT) domain" evidence="3 12">
    <location>
        <begin position="1322"/>
        <end position="1636"/>
    </location>
</feature>
<feature type="region of interest" description="N-terminal hotdog fold" evidence="6">
    <location>
        <begin position="1326"/>
        <end position="1459"/>
    </location>
</feature>
<feature type="region of interest" description="C-terminal hotdog fold" evidence="6">
    <location>
        <begin position="1486"/>
        <end position="1631"/>
    </location>
</feature>
<feature type="region of interest" description="Disordered" evidence="8">
    <location>
        <begin position="1633"/>
        <end position="1669"/>
    </location>
</feature>
<feature type="region of interest" description="Disordered" evidence="8">
    <location>
        <begin position="1772"/>
        <end position="1809"/>
    </location>
</feature>
<feature type="region of interest" description="Thioesterase (TE) domain" evidence="3 12">
    <location>
        <begin position="1896"/>
        <end position="2160"/>
    </location>
</feature>
<feature type="compositionally biased region" description="Low complexity" evidence="8">
    <location>
        <begin position="1658"/>
        <end position="1669"/>
    </location>
</feature>
<feature type="compositionally biased region" description="Low complexity" evidence="8">
    <location>
        <begin position="1772"/>
        <end position="1783"/>
    </location>
</feature>
<feature type="compositionally biased region" description="Polar residues" evidence="8">
    <location>
        <begin position="1794"/>
        <end position="1809"/>
    </location>
</feature>
<feature type="active site" description="For beta-ketoacyl synthase activity" evidence="5">
    <location>
        <position position="578"/>
    </location>
</feature>
<feature type="active site" description="For beta-ketoacyl synthase activity" evidence="5">
    <location>
        <position position="713"/>
    </location>
</feature>
<feature type="active site" description="For beta-ketoacyl synthase activity" evidence="5">
    <location>
        <position position="757"/>
    </location>
</feature>
<feature type="active site" description="For acyl/malonyl transferase activity" evidence="7">
    <location>
        <position position="1030"/>
    </location>
</feature>
<feature type="active site" description="Proton acceptor; for dehydratase activity" evidence="6">
    <location>
        <position position="1358"/>
    </location>
</feature>
<feature type="active site" description="Proton donor; for dehydratase activity" evidence="6">
    <location>
        <position position="1545"/>
    </location>
</feature>
<feature type="active site" description="For thioesterase activity" evidence="2">
    <location>
        <position position="1987"/>
    </location>
</feature>
<feature type="modified residue" description="O-(pantetheine 4'-phosphoryl)serine" evidence="4">
    <location>
        <position position="1726"/>
    </location>
</feature>
<feature type="modified residue" description="O-(pantetheine 4'-phosphoryl)serine" evidence="4">
    <location>
        <position position="1844"/>
    </location>
</feature>
<keyword id="KW-0511">Multifunctional enzyme</keyword>
<keyword id="KW-0596">Phosphopantetheine</keyword>
<keyword id="KW-0597">Phosphoprotein</keyword>
<keyword id="KW-1185">Reference proteome</keyword>
<keyword id="KW-0677">Repeat</keyword>
<keyword id="KW-0808">Transferase</keyword>
<dbReference type="EC" id="2.3.1.-" evidence="9"/>
<dbReference type="EMBL" id="MG385101">
    <property type="protein sequence ID" value="AWL82991.1"/>
    <property type="molecule type" value="mRNA"/>
</dbReference>
<dbReference type="EMBL" id="AZHE01000047">
    <property type="protein sequence ID" value="KHN93908.1"/>
    <property type="status" value="ALT_SEQ"/>
    <property type="molecule type" value="Genomic_DNA"/>
</dbReference>
<dbReference type="SMR" id="A0A2U8NET4"/>
<dbReference type="STRING" id="1081103.A0A2U8NET4"/>
<dbReference type="ESTHER" id="metas-pks1">
    <property type="family name" value="Thioesterase"/>
</dbReference>
<dbReference type="HOGENOM" id="CLU_000022_6_0_1"/>
<dbReference type="OrthoDB" id="329835at2759"/>
<dbReference type="Proteomes" id="UP000030816">
    <property type="component" value="Unassembled WGS sequence"/>
</dbReference>
<dbReference type="GO" id="GO:0004315">
    <property type="term" value="F:3-oxoacyl-[acyl-carrier-protein] synthase activity"/>
    <property type="evidence" value="ECO:0007669"/>
    <property type="project" value="InterPro"/>
</dbReference>
<dbReference type="GO" id="GO:0004312">
    <property type="term" value="F:fatty acid synthase activity"/>
    <property type="evidence" value="ECO:0007669"/>
    <property type="project" value="TreeGrafter"/>
</dbReference>
<dbReference type="GO" id="GO:0031177">
    <property type="term" value="F:phosphopantetheine binding"/>
    <property type="evidence" value="ECO:0007669"/>
    <property type="project" value="InterPro"/>
</dbReference>
<dbReference type="GO" id="GO:0006633">
    <property type="term" value="P:fatty acid biosynthetic process"/>
    <property type="evidence" value="ECO:0007669"/>
    <property type="project" value="InterPro"/>
</dbReference>
<dbReference type="GO" id="GO:0046189">
    <property type="term" value="P:phenol-containing compound biosynthetic process"/>
    <property type="evidence" value="ECO:0007669"/>
    <property type="project" value="UniProtKB-ARBA"/>
</dbReference>
<dbReference type="GO" id="GO:0030639">
    <property type="term" value="P:polyketide biosynthetic process"/>
    <property type="evidence" value="ECO:0007669"/>
    <property type="project" value="UniProtKB-ARBA"/>
</dbReference>
<dbReference type="GO" id="GO:0009403">
    <property type="term" value="P:toxin biosynthetic process"/>
    <property type="evidence" value="ECO:0007669"/>
    <property type="project" value="UniProtKB-ARBA"/>
</dbReference>
<dbReference type="CDD" id="cd00833">
    <property type="entry name" value="PKS"/>
    <property type="match status" value="1"/>
</dbReference>
<dbReference type="FunFam" id="1.10.1200.10:FF:000011">
    <property type="entry name" value="Sterigmatocystin biosynthesis polyketide synthase"/>
    <property type="match status" value="2"/>
</dbReference>
<dbReference type="FunFam" id="3.10.129.110:FF:000001">
    <property type="entry name" value="Sterigmatocystin biosynthesis polyketide synthase"/>
    <property type="match status" value="1"/>
</dbReference>
<dbReference type="FunFam" id="3.40.50.1820:FF:000116">
    <property type="entry name" value="Sterigmatocystin biosynthesis polyketide synthase"/>
    <property type="match status" value="1"/>
</dbReference>
<dbReference type="Gene3D" id="3.30.70.3290">
    <property type="match status" value="1"/>
</dbReference>
<dbReference type="Gene3D" id="3.40.47.10">
    <property type="match status" value="1"/>
</dbReference>
<dbReference type="Gene3D" id="1.10.1200.10">
    <property type="entry name" value="ACP-like"/>
    <property type="match status" value="2"/>
</dbReference>
<dbReference type="Gene3D" id="3.40.50.1820">
    <property type="entry name" value="alpha/beta hydrolase"/>
    <property type="match status" value="1"/>
</dbReference>
<dbReference type="Gene3D" id="3.40.366.10">
    <property type="entry name" value="Malonyl-Coenzyme A Acyl Carrier Protein, domain 2"/>
    <property type="match status" value="2"/>
</dbReference>
<dbReference type="Gene3D" id="3.10.129.110">
    <property type="entry name" value="Polyketide synthase dehydratase"/>
    <property type="match status" value="1"/>
</dbReference>
<dbReference type="InterPro" id="IPR029058">
    <property type="entry name" value="AB_hydrolase_fold"/>
</dbReference>
<dbReference type="InterPro" id="IPR001227">
    <property type="entry name" value="Ac_transferase_dom_sf"/>
</dbReference>
<dbReference type="InterPro" id="IPR036736">
    <property type="entry name" value="ACP-like_sf"/>
</dbReference>
<dbReference type="InterPro" id="IPR014043">
    <property type="entry name" value="Acyl_transferase_dom"/>
</dbReference>
<dbReference type="InterPro" id="IPR016035">
    <property type="entry name" value="Acyl_Trfase/lysoPLipase"/>
</dbReference>
<dbReference type="InterPro" id="IPR018201">
    <property type="entry name" value="Ketoacyl_synth_AS"/>
</dbReference>
<dbReference type="InterPro" id="IPR014031">
    <property type="entry name" value="Ketoacyl_synth_C"/>
</dbReference>
<dbReference type="InterPro" id="IPR014030">
    <property type="entry name" value="Ketoacyl_synth_N"/>
</dbReference>
<dbReference type="InterPro" id="IPR016036">
    <property type="entry name" value="Malonyl_transacylase_ACP-bd"/>
</dbReference>
<dbReference type="InterPro" id="IPR020841">
    <property type="entry name" value="PKS_Beta-ketoAc_synthase_dom"/>
</dbReference>
<dbReference type="InterPro" id="IPR042104">
    <property type="entry name" value="PKS_dehydratase_sf"/>
</dbReference>
<dbReference type="InterPro" id="IPR049551">
    <property type="entry name" value="PKS_DH_C"/>
</dbReference>
<dbReference type="InterPro" id="IPR049900">
    <property type="entry name" value="PKS_mFAS_DH"/>
</dbReference>
<dbReference type="InterPro" id="IPR050091">
    <property type="entry name" value="PKS_NRPS_Biosynth_Enz"/>
</dbReference>
<dbReference type="InterPro" id="IPR020806">
    <property type="entry name" value="PKS_PP-bd"/>
</dbReference>
<dbReference type="InterPro" id="IPR009081">
    <property type="entry name" value="PP-bd_ACP"/>
</dbReference>
<dbReference type="InterPro" id="IPR006162">
    <property type="entry name" value="Ppantetheine_attach_site"/>
</dbReference>
<dbReference type="InterPro" id="IPR030918">
    <property type="entry name" value="PT_fungal_PKS"/>
</dbReference>
<dbReference type="InterPro" id="IPR032088">
    <property type="entry name" value="SAT"/>
</dbReference>
<dbReference type="InterPro" id="IPR001031">
    <property type="entry name" value="Thioesterase"/>
</dbReference>
<dbReference type="InterPro" id="IPR016039">
    <property type="entry name" value="Thiolase-like"/>
</dbReference>
<dbReference type="NCBIfam" id="TIGR04532">
    <property type="entry name" value="PT_fungal_PKS"/>
    <property type="match status" value="1"/>
</dbReference>
<dbReference type="PANTHER" id="PTHR43775:SF45">
    <property type="entry name" value="CONIDIAL PIGMENT POLYKETIDE SYNTHASE ALB1"/>
    <property type="match status" value="1"/>
</dbReference>
<dbReference type="PANTHER" id="PTHR43775">
    <property type="entry name" value="FATTY ACID SYNTHASE"/>
    <property type="match status" value="1"/>
</dbReference>
<dbReference type="Pfam" id="PF00698">
    <property type="entry name" value="Acyl_transf_1"/>
    <property type="match status" value="1"/>
</dbReference>
<dbReference type="Pfam" id="PF00109">
    <property type="entry name" value="ketoacyl-synt"/>
    <property type="match status" value="1"/>
</dbReference>
<dbReference type="Pfam" id="PF02801">
    <property type="entry name" value="Ketoacyl-synt_C"/>
    <property type="match status" value="1"/>
</dbReference>
<dbReference type="Pfam" id="PF00550">
    <property type="entry name" value="PP-binding"/>
    <property type="match status" value="2"/>
</dbReference>
<dbReference type="Pfam" id="PF14765">
    <property type="entry name" value="PS-DH"/>
    <property type="match status" value="1"/>
</dbReference>
<dbReference type="Pfam" id="PF16073">
    <property type="entry name" value="SAT"/>
    <property type="match status" value="1"/>
</dbReference>
<dbReference type="Pfam" id="PF00975">
    <property type="entry name" value="Thioesterase"/>
    <property type="match status" value="1"/>
</dbReference>
<dbReference type="SMART" id="SM00827">
    <property type="entry name" value="PKS_AT"/>
    <property type="match status" value="1"/>
</dbReference>
<dbReference type="SMART" id="SM00825">
    <property type="entry name" value="PKS_KS"/>
    <property type="match status" value="1"/>
</dbReference>
<dbReference type="SMART" id="SM00823">
    <property type="entry name" value="PKS_PP"/>
    <property type="match status" value="2"/>
</dbReference>
<dbReference type="SUPFAM" id="SSF47336">
    <property type="entry name" value="ACP-like"/>
    <property type="match status" value="2"/>
</dbReference>
<dbReference type="SUPFAM" id="SSF53474">
    <property type="entry name" value="alpha/beta-Hydrolases"/>
    <property type="match status" value="1"/>
</dbReference>
<dbReference type="SUPFAM" id="SSF52151">
    <property type="entry name" value="FabD/lysophospholipase-like"/>
    <property type="match status" value="1"/>
</dbReference>
<dbReference type="SUPFAM" id="SSF55048">
    <property type="entry name" value="Probable ACP-binding domain of malonyl-CoA ACP transacylase"/>
    <property type="match status" value="1"/>
</dbReference>
<dbReference type="SUPFAM" id="SSF53901">
    <property type="entry name" value="Thiolase-like"/>
    <property type="match status" value="1"/>
</dbReference>
<dbReference type="PROSITE" id="PS50075">
    <property type="entry name" value="CARRIER"/>
    <property type="match status" value="2"/>
</dbReference>
<dbReference type="PROSITE" id="PS00606">
    <property type="entry name" value="KS3_1"/>
    <property type="match status" value="1"/>
</dbReference>
<dbReference type="PROSITE" id="PS52004">
    <property type="entry name" value="KS3_2"/>
    <property type="match status" value="1"/>
</dbReference>
<dbReference type="PROSITE" id="PS00012">
    <property type="entry name" value="PHOSPHOPANTETHEINE"/>
    <property type="match status" value="2"/>
</dbReference>
<dbReference type="PROSITE" id="PS52019">
    <property type="entry name" value="PKS_MFAS_DH"/>
    <property type="match status" value="1"/>
</dbReference>
<protein>
    <recommendedName>
        <fullName evidence="10">Polyketide synthase 1</fullName>
        <ecNumber evidence="9">2.3.1.-</ecNumber>
    </recommendedName>
    <alternativeName>
        <fullName evidence="10">Conidial pigment biosynthesis polyketide synthase</fullName>
    </alternativeName>
</protein>
<name>PKS1_METAS</name>
<organism>
    <name type="scientific">Metarhizium album (strain ARSEF 1941)</name>
    <dbReference type="NCBI Taxonomy" id="1081103"/>
    <lineage>
        <taxon>Eukaryota</taxon>
        <taxon>Fungi</taxon>
        <taxon>Dikarya</taxon>
        <taxon>Ascomycota</taxon>
        <taxon>Pezizomycotina</taxon>
        <taxon>Sordariomycetes</taxon>
        <taxon>Hypocreomycetidae</taxon>
        <taxon>Hypocreales</taxon>
        <taxon>Clavicipitaceae</taxon>
        <taxon>Metarhizium</taxon>
    </lineage>
</organism>
<accession>A0A2U8NET4</accession>
<accession>A0A0B2WJ51</accession>
<sequence length="2162" mass="235429">MEHVIIKQPDTGGDSVRIFVFGDQTSCNLSNLQPLLLKRSNIYLVSFVDQVNCALRHEIARLTTAERRSFPAFSSIQNLVTRGLQKERSVALESTLATIYQLCCFFNYFGDGQKSYPTGPNTHVSGLCIGALSAAAVSSSRSLDELVQAGIEAVLVSLKVGLLVSRTAALFSHQASANSSCSSSASWSYTVPDSQLPLALAEEAIASYTDKTNIPPLSSPYISARGQNSWTVSGPPAVLQGFLRSSQVVEAPRLTPLAVHAPYHAPHIFSVSDVENVIQAVGPVSSLSSKLPFISTSSCGSLSSGTRFQDLLFRAVEGILILPLDLRAAAENMRQVFEAVEDVSRCALIPISTGVCTSLKMSFSPVLADCVSIVDSIMEGTAADGGSKSAPATNPGDSKIAIIGMSGRFPEAADVEAFWAVLYKGLDVHRPVPKDRYDGELYYDPTGKKKNTCKVMHGCWINEPGLFDAKFFNISPKEAEQSDPGQRLALTTAYEALESAGVVAGRTPSTQRDRVGVFYGMTSDDYREVRASVCKPQCKPFPYTKANLTTGGNRAFTPGKINYFFKYCGPSVSVDTACSSSLAAIHLACNSIWRNECDTAVAGGTNVMSNPDSFVGLDRGHFLSRKGNCNNFDDEADGYCRADAVATVVLKRLEDAMADHDPILGVISGAHTNHSAESVSITRPHSGAQEEIFSKLLCESGVHPHQVSYVEMHGTGTQAGDATEMTSVLNCFAPSTGPRRLPHESLHLGSAKANVGHSESASGVTSLIKVLLMMEKNMIPPHCGIKSKINHRFPTDLEQRNVHIAKTATRWGRRREFDNIRRVFVNNFSAAGGNTALLVEDYPPLAAASSQRDSRTAHVVTTSAKCIQSLRGNLEKLKAFVQKTSSSESFMSKLSYTTTARRMHHPFRVAIPAAKPEELLSALDTELRRDSCRCSSESAVAFVFSGQGSQYGAMGKHLLHYTIFRGEIDSYDILAQRHGFPSIMPLVDGSVAIEHLEPLVVQLGTVCVQMALASLWIAFGMQPSYVVGHSLGHFAALKVSGALTASDTIYLVGMRARLLQNKCSIGSHAMLAVRSSAEDVQAYLDADVHDIACINSPQDTVVSGRVDDIDRLSERLLDKGIKATRVNVPFAFHSSQVEPILDELGAIASQVKFHSPCVPIGCPLQGKSLLPGETLTSEASHVKRHCRQTVNFRGILQSAKSDGLVSEKTAWIEIGPHTVCSMLVKANINHDVTAVPSLMRSHDGWQVLASSLATLYSKGLSVAWDEYHHDFECCKEVLRLPAYSWDNKRYWIEYVHDWLLTRGDPPVPAAAPSPAPVSSFSTASVHRIVRESVDRETVALTAECEFTSEQLREVVYGHVVNGNRVCTSSLYADFGVTLGTYILDKYRADLKDHSVDVQEMVVNKPLVHKEGLPMLLRIDVVHDMTASKSATMSIYSINAKGNKTVDHAKSSLCFGESRAWLRSWDSTQYYVERSIEWLKEKADQGLNSRLSSGVIYKLFSSLVEYSSAYKGMKEAIVNTEDFEATALVQFQVDEGNFRCNPMWVDSCGQLAGFLMNGHSKTPLDQVFINHGWQSFRTVRKFCKDKTYRTYVRMRCIEGTTYAGDVYIFDDEGIVGVCGSITFQGVPRRVLDAAMPAPKSPNKTRDHASPNATISRAKPPQGSSPASSAQLAQHSSIEPLKLDAALKSATTAIDPMHAVLRILSEEIGIPLTSLQYDLVFADYGVDSLLSLTISGRLREELDLDIESSVFETCATVGDFAVHLGLDTLASYQSSGESNVSGGVSPRSDSVAAMSSDVTTPPAQSPLGSMSSSPCEDLCAIIAEEIGVSMSVIKSDANLGELGMDSLMSLTVLSRLREELDLDLEGDFFVAHPTYSSFKHVFEQEIEPEIGLGESADLKKYHATSTLLQGSPKSALYTLFLLPDGSGSATSYATISAVGRDICVYGLNCPWLKSAEKLVQFGLKGLASLYVGEIRRRAPHGPYNLGGWSAGGICAYEAAIQFTREGEAVERLILLDSPNPIGLEKLPPRLFDFVNGLGLFGEGKAPDWLLAHFLAFIDALDQWKPVPWDKALDSTTPPPMTYILWAEDGLCKGIDARPEYRDDDPREMRWLLENRTNFGGNSWDILLGEGRLLTERIQDANHFTMLRRGKNAERVAAFIRSAFK</sequence>
<proteinExistence type="evidence at protein level"/>